<feature type="chain" id="PRO_0000325816" description="F-actin-uncapping protein LRRC16A">
    <location>
        <begin position="1"/>
        <end position="1374"/>
    </location>
</feature>
<feature type="repeat" description="LRR 1">
    <location>
        <begin position="245"/>
        <end position="269"/>
    </location>
</feature>
<feature type="repeat" description="LRR 2">
    <location>
        <begin position="275"/>
        <end position="298"/>
    </location>
</feature>
<feature type="repeat" description="LRR 3">
    <location>
        <begin position="304"/>
        <end position="327"/>
    </location>
</feature>
<feature type="repeat" description="LRR 4">
    <location>
        <begin position="336"/>
        <end position="363"/>
    </location>
</feature>
<feature type="repeat" description="LRR 5">
    <location>
        <begin position="391"/>
        <end position="418"/>
    </location>
</feature>
<feature type="repeat" description="LRR 6">
    <location>
        <begin position="423"/>
        <end position="447"/>
    </location>
</feature>
<feature type="repeat" description="LRR 7">
    <location>
        <begin position="485"/>
        <end position="510"/>
    </location>
</feature>
<feature type="repeat" description="LRR 8">
    <location>
        <begin position="547"/>
        <end position="570"/>
    </location>
</feature>
<feature type="repeat" description="LRR 9">
    <location>
        <begin position="574"/>
        <end position="597"/>
    </location>
</feature>
<feature type="repeat" description="LRR 10">
    <location>
        <begin position="658"/>
        <end position="682"/>
    </location>
</feature>
<feature type="repeat" description="LRR 11">
    <location>
        <begin position="962"/>
        <end position="985"/>
    </location>
</feature>
<feature type="region of interest" description="Disordered" evidence="4">
    <location>
        <begin position="961"/>
        <end position="982"/>
    </location>
</feature>
<feature type="region of interest" description="Inhibits capping activity of CP" evidence="5">
    <location>
        <begin position="962"/>
        <end position="1084"/>
    </location>
</feature>
<feature type="region of interest" description="Disordered" evidence="4">
    <location>
        <begin position="1040"/>
        <end position="1374"/>
    </location>
</feature>
<feature type="region of interest" description="Necessary for localization at the cell membrane" evidence="1">
    <location>
        <begin position="1058"/>
        <end position="1092"/>
    </location>
</feature>
<feature type="coiled-coil region" evidence="3">
    <location>
        <begin position="714"/>
        <end position="738"/>
    </location>
</feature>
<feature type="compositionally biased region" description="Basic and acidic residues" evidence="4">
    <location>
        <begin position="1040"/>
        <end position="1064"/>
    </location>
</feature>
<feature type="compositionally biased region" description="Basic and acidic residues" evidence="4">
    <location>
        <begin position="1108"/>
        <end position="1132"/>
    </location>
</feature>
<feature type="compositionally biased region" description="Basic and acidic residues" evidence="4">
    <location>
        <begin position="1141"/>
        <end position="1150"/>
    </location>
</feature>
<feature type="compositionally biased region" description="Polar residues" evidence="4">
    <location>
        <begin position="1191"/>
        <end position="1204"/>
    </location>
</feature>
<feature type="compositionally biased region" description="Basic and acidic residues" evidence="4">
    <location>
        <begin position="1232"/>
        <end position="1244"/>
    </location>
</feature>
<feature type="compositionally biased region" description="Low complexity" evidence="4">
    <location>
        <begin position="1245"/>
        <end position="1263"/>
    </location>
</feature>
<feature type="compositionally biased region" description="Low complexity" evidence="4">
    <location>
        <begin position="1317"/>
        <end position="1330"/>
    </location>
</feature>
<feature type="compositionally biased region" description="Basic and acidic residues" evidence="4">
    <location>
        <begin position="1343"/>
        <end position="1356"/>
    </location>
</feature>
<feature type="modified residue" description="N-acetylmethionine" evidence="1">
    <location>
        <position position="1"/>
    </location>
</feature>
<feature type="modified residue" description="Phosphoserine" evidence="1">
    <location>
        <position position="122"/>
    </location>
</feature>
<feature type="modified residue" description="Phosphothreonine" evidence="10">
    <location>
        <position position="920"/>
    </location>
</feature>
<feature type="modified residue" description="Phosphoserine" evidence="10">
    <location>
        <position position="972"/>
    </location>
</feature>
<feature type="modified residue" description="Phosphoserine" evidence="1">
    <location>
        <position position="1096"/>
    </location>
</feature>
<feature type="modified residue" description="Phosphothreonine" evidence="1">
    <location>
        <position position="1229"/>
    </location>
</feature>
<feature type="modified residue" description="Phosphoserine" evidence="1">
    <location>
        <position position="1281"/>
    </location>
</feature>
<feature type="modified residue" description="Phosphoserine" evidence="1">
    <location>
        <position position="1289"/>
    </location>
</feature>
<feature type="modified residue" description="Phosphoserine" evidence="10">
    <location>
        <position position="1291"/>
    </location>
</feature>
<feature type="modified residue" description="Phosphoserine" evidence="10">
    <location>
        <position position="1295"/>
    </location>
</feature>
<feature type="modified residue" description="Phosphoserine" evidence="1">
    <location>
        <position position="1319"/>
    </location>
</feature>
<feature type="modified residue" description="Phosphoserine" evidence="1">
    <location>
        <position position="1328"/>
    </location>
</feature>
<feature type="modified residue" description="Phosphoserine" evidence="10">
    <location>
        <position position="1335"/>
    </location>
</feature>
<feature type="modified residue" description="Phosphoserine" evidence="10">
    <location>
        <position position="1363"/>
    </location>
</feature>
<feature type="splice variant" id="VSP_032421" description="In isoform 2." evidence="7">
    <original>I</original>
    <variation>M</variation>
    <location>
        <position position="260"/>
    </location>
</feature>
<feature type="splice variant" id="VSP_032422" description="In isoform 2." evidence="7">
    <location>
        <begin position="261"/>
        <end position="1374"/>
    </location>
</feature>
<feature type="splice variant" id="VSP_032423" description="In isoform 3." evidence="7">
    <original>M</original>
    <variation>MTLCCTS</variation>
    <location>
        <position position="918"/>
    </location>
</feature>
<feature type="splice variant" id="VSP_032424" description="In isoform 3." evidence="7">
    <original>SRRSWGPAQEYQEQKQRSSGKDGHQGSKCSDSGEEAEKEFIFV</original>
    <variation>CPTNF</variation>
    <location>
        <begin position="1332"/>
        <end position="1374"/>
    </location>
</feature>
<feature type="mutagenesis site" description="Decreased ability to bind heterodimeric capping protein (CP) and to inhibit the actin-capping activity of CP." evidence="5">
    <original>K</original>
    <variation>A</variation>
    <location>
        <position position="991"/>
    </location>
</feature>
<feature type="mutagenesis site" description="Loss of ability to bind heterodimeric capping protein (CP) and to inhibit the actin-capping activity of CP." evidence="5">
    <original>R</original>
    <variation>A</variation>
    <location>
        <position position="993"/>
    </location>
</feature>
<feature type="mutagenesis site" description="Loss of ability to bind heterodimeric capping protein (CP) and to inhibit the actin-capping activity of CP." evidence="5">
    <original>R</original>
    <variation>E</variation>
    <location>
        <position position="993"/>
    </location>
</feature>
<feature type="sequence conflict" description="In Ref. 1; AAR96060." evidence="8" ref="1">
    <original>V</original>
    <variation>A</variation>
    <location>
        <position position="8"/>
    </location>
</feature>
<feature type="sequence conflict" description="In Ref. 1; AAR96060 and 4; AAH12229." evidence="8" ref="1 4">
    <original>L</original>
    <variation>W</variation>
    <location>
        <position position="782"/>
    </location>
</feature>
<feature type="sequence conflict" description="In Ref. 4; AAH12229." evidence="8" ref="4">
    <original>N</original>
    <variation>S</variation>
    <location>
        <position position="796"/>
    </location>
</feature>
<feature type="sequence conflict" description="In Ref. 1; AAR96060 and 4; AAH12229." evidence="8" ref="1 4">
    <original>S</original>
    <variation>P</variation>
    <location>
        <position position="1309"/>
    </location>
</feature>
<feature type="helix" evidence="13">
    <location>
        <begin position="11"/>
        <end position="17"/>
    </location>
</feature>
<feature type="strand" evidence="13">
    <location>
        <begin position="22"/>
        <end position="24"/>
    </location>
</feature>
<feature type="strand" evidence="13">
    <location>
        <begin position="27"/>
        <end position="36"/>
    </location>
</feature>
<feature type="turn" evidence="13">
    <location>
        <begin position="37"/>
        <end position="39"/>
    </location>
</feature>
<feature type="strand" evidence="13">
    <location>
        <begin position="40"/>
        <end position="48"/>
    </location>
</feature>
<feature type="strand" evidence="13">
    <location>
        <begin position="50"/>
        <end position="61"/>
    </location>
</feature>
<feature type="strand" evidence="13">
    <location>
        <begin position="66"/>
        <end position="69"/>
    </location>
</feature>
<feature type="turn" evidence="13">
    <location>
        <begin position="70"/>
        <end position="72"/>
    </location>
</feature>
<feature type="strand" evidence="13">
    <location>
        <begin position="73"/>
        <end position="77"/>
    </location>
</feature>
<feature type="strand" evidence="13">
    <location>
        <begin position="83"/>
        <end position="90"/>
    </location>
</feature>
<feature type="strand" evidence="13">
    <location>
        <begin position="93"/>
        <end position="98"/>
    </location>
</feature>
<feature type="helix" evidence="13">
    <location>
        <begin position="100"/>
        <end position="116"/>
    </location>
</feature>
<feature type="helix" evidence="13">
    <location>
        <begin position="123"/>
        <end position="126"/>
    </location>
</feature>
<feature type="strand" evidence="13">
    <location>
        <begin position="127"/>
        <end position="131"/>
    </location>
</feature>
<feature type="helix" evidence="13">
    <location>
        <begin position="135"/>
        <end position="147"/>
    </location>
</feature>
<feature type="helix" evidence="13">
    <location>
        <begin position="155"/>
        <end position="170"/>
    </location>
</feature>
<feature type="helix" evidence="13">
    <location>
        <begin position="176"/>
        <end position="189"/>
    </location>
</feature>
<feature type="strand" evidence="13">
    <location>
        <begin position="193"/>
        <end position="195"/>
    </location>
</feature>
<feature type="helix" evidence="13">
    <location>
        <begin position="196"/>
        <end position="199"/>
    </location>
</feature>
<feature type="helix" evidence="13">
    <location>
        <begin position="205"/>
        <end position="207"/>
    </location>
</feature>
<feature type="helix" evidence="13">
    <location>
        <begin position="208"/>
        <end position="212"/>
    </location>
</feature>
<feature type="turn" evidence="13">
    <location>
        <begin position="213"/>
        <end position="216"/>
    </location>
</feature>
<feature type="strand" evidence="13">
    <location>
        <begin position="222"/>
        <end position="227"/>
    </location>
</feature>
<feature type="helix" evidence="13">
    <location>
        <begin position="232"/>
        <end position="244"/>
    </location>
</feature>
<feature type="strand" evidence="13">
    <location>
        <begin position="250"/>
        <end position="254"/>
    </location>
</feature>
<feature type="helix" evidence="13">
    <location>
        <begin position="260"/>
        <end position="272"/>
    </location>
</feature>
<feature type="strand" evidence="13">
    <location>
        <begin position="280"/>
        <end position="282"/>
    </location>
</feature>
<feature type="helix" evidence="13">
    <location>
        <begin position="291"/>
        <end position="301"/>
    </location>
</feature>
<feature type="strand" evidence="13">
    <location>
        <begin position="308"/>
        <end position="311"/>
    </location>
</feature>
<feature type="helix" evidence="13">
    <location>
        <begin position="319"/>
        <end position="331"/>
    </location>
</feature>
<feature type="strand" evidence="13">
    <location>
        <begin position="332"/>
        <end position="334"/>
    </location>
</feature>
<feature type="helix" evidence="13">
    <location>
        <begin position="335"/>
        <end position="338"/>
    </location>
</feature>
<feature type="strand" evidence="13">
    <location>
        <begin position="341"/>
        <end position="343"/>
    </location>
</feature>
<feature type="strand" evidence="13">
    <location>
        <begin position="350"/>
        <end position="352"/>
    </location>
</feature>
<feature type="helix" evidence="13">
    <location>
        <begin position="355"/>
        <end position="362"/>
    </location>
</feature>
<feature type="strand" evidence="13">
    <location>
        <begin position="369"/>
        <end position="371"/>
    </location>
</feature>
<feature type="helix" evidence="13">
    <location>
        <begin position="379"/>
        <end position="389"/>
    </location>
</feature>
<feature type="turn" evidence="13">
    <location>
        <begin position="391"/>
        <end position="393"/>
    </location>
</feature>
<feature type="strand" evidence="13">
    <location>
        <begin position="396"/>
        <end position="398"/>
    </location>
</feature>
<feature type="strand" evidence="13">
    <location>
        <begin position="406"/>
        <end position="408"/>
    </location>
</feature>
<feature type="helix" evidence="13">
    <location>
        <begin position="414"/>
        <end position="422"/>
    </location>
</feature>
<feature type="strand" evidence="13">
    <location>
        <begin position="428"/>
        <end position="430"/>
    </location>
</feature>
<feature type="helix" evidence="13">
    <location>
        <begin position="438"/>
        <end position="449"/>
    </location>
</feature>
<feature type="strand" evidence="13">
    <location>
        <begin position="456"/>
        <end position="460"/>
    </location>
</feature>
<feature type="helix" evidence="13">
    <location>
        <begin position="466"/>
        <end position="472"/>
    </location>
</feature>
<feature type="strand" evidence="13">
    <location>
        <begin position="475"/>
        <end position="479"/>
    </location>
</feature>
<feature type="strand" evidence="13">
    <location>
        <begin position="486"/>
        <end position="492"/>
    </location>
</feature>
<feature type="helix" evidence="13">
    <location>
        <begin position="499"/>
        <end position="501"/>
    </location>
</feature>
<feature type="helix" evidence="13">
    <location>
        <begin position="502"/>
        <end position="510"/>
    </location>
</feature>
<feature type="strand" evidence="13">
    <location>
        <begin position="517"/>
        <end position="519"/>
    </location>
</feature>
<feature type="helix" evidence="13">
    <location>
        <begin position="529"/>
        <end position="544"/>
    </location>
</feature>
<feature type="strand" evidence="13">
    <location>
        <begin position="552"/>
        <end position="554"/>
    </location>
</feature>
<feature type="helix" evidence="13">
    <location>
        <begin position="561"/>
        <end position="564"/>
    </location>
</feature>
<feature type="helix" evidence="13">
    <location>
        <begin position="565"/>
        <end position="568"/>
    </location>
</feature>
<feature type="helix" evidence="13">
    <location>
        <begin position="570"/>
        <end position="573"/>
    </location>
</feature>
<feature type="strand" evidence="13">
    <location>
        <begin position="578"/>
        <end position="581"/>
    </location>
</feature>
<feature type="helix" evidence="13">
    <location>
        <begin position="588"/>
        <end position="601"/>
    </location>
</feature>
<feature type="strand" evidence="13">
    <location>
        <begin position="606"/>
        <end position="609"/>
    </location>
</feature>
<feature type="helix" evidence="13">
    <location>
        <begin position="617"/>
        <end position="628"/>
    </location>
</feature>
<feature type="helix" evidence="13">
    <location>
        <begin position="640"/>
        <end position="649"/>
    </location>
</feature>
<feature type="helix" evidence="13">
    <location>
        <begin position="651"/>
        <end position="667"/>
    </location>
</feature>
<feature type="strand" evidence="11">
    <location>
        <begin position="968"/>
        <end position="971"/>
    </location>
</feature>
<feature type="helix" evidence="12">
    <location>
        <begin position="989"/>
        <end position="992"/>
    </location>
</feature>
<feature type="strand" evidence="11">
    <location>
        <begin position="1031"/>
        <end position="1034"/>
    </location>
</feature>
<organism>
    <name type="scientific">Mus musculus</name>
    <name type="common">Mouse</name>
    <dbReference type="NCBI Taxonomy" id="10090"/>
    <lineage>
        <taxon>Eukaryota</taxon>
        <taxon>Metazoa</taxon>
        <taxon>Chordata</taxon>
        <taxon>Craniata</taxon>
        <taxon>Vertebrata</taxon>
        <taxon>Euteleostomi</taxon>
        <taxon>Mammalia</taxon>
        <taxon>Eutheria</taxon>
        <taxon>Euarchontoglires</taxon>
        <taxon>Glires</taxon>
        <taxon>Rodentia</taxon>
        <taxon>Myomorpha</taxon>
        <taxon>Muroidea</taxon>
        <taxon>Muridae</taxon>
        <taxon>Murinae</taxon>
        <taxon>Mus</taxon>
        <taxon>Mus</taxon>
    </lineage>
</organism>
<dbReference type="EMBL" id="AY437876">
    <property type="protein sequence ID" value="AAR96060.1"/>
    <property type="molecule type" value="mRNA"/>
</dbReference>
<dbReference type="EMBL" id="AK051570">
    <property type="protein sequence ID" value="BAC34678.1"/>
    <property type="molecule type" value="mRNA"/>
</dbReference>
<dbReference type="EMBL" id="AK043591">
    <property type="protein sequence ID" value="BAC31591.1"/>
    <property type="status" value="ALT_INIT"/>
    <property type="molecule type" value="mRNA"/>
</dbReference>
<dbReference type="EMBL" id="AL590864">
    <property type="status" value="NOT_ANNOTATED_CDS"/>
    <property type="molecule type" value="Genomic_DNA"/>
</dbReference>
<dbReference type="EMBL" id="AL606464">
    <property type="status" value="NOT_ANNOTATED_CDS"/>
    <property type="molecule type" value="Genomic_DNA"/>
</dbReference>
<dbReference type="EMBL" id="AL683873">
    <property type="status" value="NOT_ANNOTATED_CDS"/>
    <property type="molecule type" value="Genomic_DNA"/>
</dbReference>
<dbReference type="EMBL" id="BC012229">
    <property type="protein sequence ID" value="AAH12229.1"/>
    <property type="status" value="ALT_INIT"/>
    <property type="molecule type" value="mRNA"/>
</dbReference>
<dbReference type="CCDS" id="CCDS36621.1">
    <molecule id="Q6EDY6-1"/>
</dbReference>
<dbReference type="RefSeq" id="NP_081101.3">
    <molecule id="Q6EDY6-1"/>
    <property type="nucleotide sequence ID" value="NM_026825.3"/>
</dbReference>
<dbReference type="RefSeq" id="XP_011242640.1">
    <molecule id="Q6EDY6-3"/>
    <property type="nucleotide sequence ID" value="XM_011244338.4"/>
</dbReference>
<dbReference type="PDB" id="2KZ7">
    <property type="method" value="NMR"/>
    <property type="chains" value="C=965-1039"/>
</dbReference>
<dbReference type="PDB" id="3AA0">
    <property type="method" value="X-ray"/>
    <property type="resolution" value="1.70 A"/>
    <property type="chains" value="C=985-1005"/>
</dbReference>
<dbReference type="PDB" id="3AAE">
    <property type="method" value="X-ray"/>
    <property type="resolution" value="3.30 A"/>
    <property type="chains" value="V/W/X/Y/Z=971-1002"/>
</dbReference>
<dbReference type="PDB" id="4K17">
    <property type="method" value="X-ray"/>
    <property type="resolution" value="2.90 A"/>
    <property type="chains" value="A/B/C/D=1-668"/>
</dbReference>
<dbReference type="PDBsum" id="2KZ7"/>
<dbReference type="PDBsum" id="3AA0"/>
<dbReference type="PDBsum" id="3AAE"/>
<dbReference type="PDBsum" id="4K17"/>
<dbReference type="BMRB" id="Q6EDY6"/>
<dbReference type="SMR" id="Q6EDY6"/>
<dbReference type="BioGRID" id="213021">
    <property type="interactions" value="5"/>
</dbReference>
<dbReference type="DIP" id="DIP-58942N"/>
<dbReference type="FunCoup" id="Q6EDY6">
    <property type="interactions" value="2659"/>
</dbReference>
<dbReference type="IntAct" id="Q6EDY6">
    <property type="interactions" value="1"/>
</dbReference>
<dbReference type="STRING" id="10090.ENSMUSP00000072662"/>
<dbReference type="GlyGen" id="Q6EDY6">
    <property type="glycosylation" value="2 sites, 2 N-linked glycans (2 sites)"/>
</dbReference>
<dbReference type="iPTMnet" id="Q6EDY6"/>
<dbReference type="PhosphoSitePlus" id="Q6EDY6"/>
<dbReference type="SwissPalm" id="Q6EDY6"/>
<dbReference type="jPOST" id="Q6EDY6"/>
<dbReference type="PaxDb" id="10090-ENSMUSP00000072662"/>
<dbReference type="PeptideAtlas" id="Q6EDY6"/>
<dbReference type="ProteomicsDB" id="265543">
    <molecule id="Q6EDY6-1"/>
</dbReference>
<dbReference type="ProteomicsDB" id="265544">
    <molecule id="Q6EDY6-2"/>
</dbReference>
<dbReference type="ProteomicsDB" id="265545">
    <molecule id="Q6EDY6-3"/>
</dbReference>
<dbReference type="Pumba" id="Q6EDY6"/>
<dbReference type="Antibodypedia" id="25380">
    <property type="antibodies" value="85 antibodies from 17 providers"/>
</dbReference>
<dbReference type="DNASU" id="68732"/>
<dbReference type="Ensembl" id="ENSMUST00000072889.12">
    <molecule id="Q6EDY6-1"/>
    <property type="protein sequence ID" value="ENSMUSP00000072662.6"/>
    <property type="gene ID" value="ENSMUSG00000021338.18"/>
</dbReference>
<dbReference type="GeneID" id="68732"/>
<dbReference type="KEGG" id="mmu:68732"/>
<dbReference type="UCSC" id="uc007pvn.1">
    <molecule id="Q6EDY6-1"/>
    <property type="organism name" value="mouse"/>
</dbReference>
<dbReference type="UCSC" id="uc007pvp.1">
    <molecule id="Q6EDY6-2"/>
    <property type="organism name" value="mouse"/>
</dbReference>
<dbReference type="AGR" id="MGI:1915982"/>
<dbReference type="CTD" id="55604"/>
<dbReference type="MGI" id="MGI:1915982">
    <property type="gene designation" value="Carmil1"/>
</dbReference>
<dbReference type="VEuPathDB" id="HostDB:ENSMUSG00000021338"/>
<dbReference type="eggNOG" id="KOG4242">
    <property type="taxonomic scope" value="Eukaryota"/>
</dbReference>
<dbReference type="GeneTree" id="ENSGT00940000155112"/>
<dbReference type="InParanoid" id="Q6EDY6"/>
<dbReference type="OMA" id="KGCEERL"/>
<dbReference type="OrthoDB" id="18598at2759"/>
<dbReference type="PhylomeDB" id="Q6EDY6"/>
<dbReference type="TreeFam" id="TF316381"/>
<dbReference type="Reactome" id="R-MMU-983231">
    <property type="pathway name" value="Factors involved in megakaryocyte development and platelet production"/>
</dbReference>
<dbReference type="BioGRID-ORCS" id="68732">
    <property type="hits" value="2 hits in 75 CRISPR screens"/>
</dbReference>
<dbReference type="CD-CODE" id="CE726F99">
    <property type="entry name" value="Postsynaptic density"/>
</dbReference>
<dbReference type="ChiTaRS" id="Lrrc16a">
    <property type="organism name" value="mouse"/>
</dbReference>
<dbReference type="EvolutionaryTrace" id="Q6EDY6"/>
<dbReference type="PRO" id="PR:Q6EDY6"/>
<dbReference type="Proteomes" id="UP000000589">
    <property type="component" value="Chromosome 13"/>
</dbReference>
<dbReference type="RNAct" id="Q6EDY6">
    <property type="molecule type" value="protein"/>
</dbReference>
<dbReference type="Bgee" id="ENSMUSG00000021338">
    <property type="expression patterns" value="Expressed in animal zygote and 243 other cell types or tissues"/>
</dbReference>
<dbReference type="ExpressionAtlas" id="Q6EDY6">
    <property type="expression patterns" value="baseline and differential"/>
</dbReference>
<dbReference type="GO" id="GO:0005737">
    <property type="term" value="C:cytoplasm"/>
    <property type="evidence" value="ECO:0000250"/>
    <property type="project" value="UniProtKB"/>
</dbReference>
<dbReference type="GO" id="GO:0005829">
    <property type="term" value="C:cytosol"/>
    <property type="evidence" value="ECO:0007669"/>
    <property type="project" value="Ensembl"/>
</dbReference>
<dbReference type="GO" id="GO:0031941">
    <property type="term" value="C:filamentous actin"/>
    <property type="evidence" value="ECO:0000314"/>
    <property type="project" value="UniProtKB"/>
</dbReference>
<dbReference type="GO" id="GO:0045111">
    <property type="term" value="C:intermediate filament cytoskeleton"/>
    <property type="evidence" value="ECO:0000250"/>
    <property type="project" value="UniProtKB"/>
</dbReference>
<dbReference type="GO" id="GO:0030027">
    <property type="term" value="C:lamellipodium"/>
    <property type="evidence" value="ECO:0000314"/>
    <property type="project" value="UniProtKB"/>
</dbReference>
<dbReference type="GO" id="GO:0044354">
    <property type="term" value="C:macropinosome"/>
    <property type="evidence" value="ECO:0000250"/>
    <property type="project" value="UniProtKB"/>
</dbReference>
<dbReference type="GO" id="GO:0016607">
    <property type="term" value="C:nuclear speck"/>
    <property type="evidence" value="ECO:0007669"/>
    <property type="project" value="Ensembl"/>
</dbReference>
<dbReference type="GO" id="GO:0005634">
    <property type="term" value="C:nucleus"/>
    <property type="evidence" value="ECO:0000250"/>
    <property type="project" value="BHF-UCL"/>
</dbReference>
<dbReference type="GO" id="GO:0005886">
    <property type="term" value="C:plasma membrane"/>
    <property type="evidence" value="ECO:0000250"/>
    <property type="project" value="UniProtKB"/>
</dbReference>
<dbReference type="GO" id="GO:0044877">
    <property type="term" value="F:protein-containing complex binding"/>
    <property type="evidence" value="ECO:0000315"/>
    <property type="project" value="UniProtKB"/>
</dbReference>
<dbReference type="GO" id="GO:0051639">
    <property type="term" value="P:actin filament network formation"/>
    <property type="evidence" value="ECO:0000250"/>
    <property type="project" value="UniProtKB"/>
</dbReference>
<dbReference type="GO" id="GO:0051638">
    <property type="term" value="P:barbed-end actin filament uncapping"/>
    <property type="evidence" value="ECO:0000315"/>
    <property type="project" value="UniProtKB"/>
</dbReference>
<dbReference type="GO" id="GO:0016477">
    <property type="term" value="P:cell migration"/>
    <property type="evidence" value="ECO:0000250"/>
    <property type="project" value="BHF-UCL"/>
</dbReference>
<dbReference type="GO" id="GO:0007163">
    <property type="term" value="P:establishment or maintenance of cell polarity"/>
    <property type="evidence" value="ECO:0000250"/>
    <property type="project" value="UniProtKB"/>
</dbReference>
<dbReference type="GO" id="GO:0030032">
    <property type="term" value="P:lamellipodium assembly"/>
    <property type="evidence" value="ECO:0000250"/>
    <property type="project" value="BHF-UCL"/>
</dbReference>
<dbReference type="GO" id="GO:0044351">
    <property type="term" value="P:macropinocytosis"/>
    <property type="evidence" value="ECO:0000250"/>
    <property type="project" value="UniProtKB"/>
</dbReference>
<dbReference type="GO" id="GO:2000813">
    <property type="term" value="P:negative regulation of barbed-end actin filament capping"/>
    <property type="evidence" value="ECO:0000315"/>
    <property type="project" value="UniProtKB"/>
</dbReference>
<dbReference type="GO" id="GO:0030838">
    <property type="term" value="P:positive regulation of actin filament polymerization"/>
    <property type="evidence" value="ECO:0000315"/>
    <property type="project" value="UniProtKB"/>
</dbReference>
<dbReference type="GO" id="GO:0030335">
    <property type="term" value="P:positive regulation of cell migration"/>
    <property type="evidence" value="ECO:0000315"/>
    <property type="project" value="UniProtKB"/>
</dbReference>
<dbReference type="GO" id="GO:1902745">
    <property type="term" value="P:positive regulation of lamellipodium organization"/>
    <property type="evidence" value="ECO:0000315"/>
    <property type="project" value="UniProtKB"/>
</dbReference>
<dbReference type="GO" id="GO:0051496">
    <property type="term" value="P:positive regulation of stress fiber assembly"/>
    <property type="evidence" value="ECO:0000315"/>
    <property type="project" value="UniProtKB"/>
</dbReference>
<dbReference type="GO" id="GO:1900026">
    <property type="term" value="P:positive regulation of substrate adhesion-dependent cell spreading"/>
    <property type="evidence" value="ECO:0000315"/>
    <property type="project" value="UniProtKB"/>
</dbReference>
<dbReference type="GO" id="GO:0031529">
    <property type="term" value="P:ruffle organization"/>
    <property type="evidence" value="ECO:0000250"/>
    <property type="project" value="BHF-UCL"/>
</dbReference>
<dbReference type="GO" id="GO:0046415">
    <property type="term" value="P:urate metabolic process"/>
    <property type="evidence" value="ECO:0000250"/>
    <property type="project" value="BHF-UCL"/>
</dbReference>
<dbReference type="FunFam" id="3.80.10.10:FF:000009">
    <property type="entry name" value="F-actin-uncapping protein LRRC16A isoform X1"/>
    <property type="match status" value="1"/>
</dbReference>
<dbReference type="Gene3D" id="6.10.140.1850">
    <property type="match status" value="1"/>
</dbReference>
<dbReference type="Gene3D" id="2.30.29.30">
    <property type="entry name" value="Pleckstrin-homology domain (PH domain)/Phosphotyrosine-binding domain (PTB)"/>
    <property type="match status" value="1"/>
</dbReference>
<dbReference type="Gene3D" id="3.80.10.10">
    <property type="entry name" value="Ribonuclease Inhibitor"/>
    <property type="match status" value="1"/>
</dbReference>
<dbReference type="InterPro" id="IPR031943">
    <property type="entry name" value="CARMIL_C"/>
</dbReference>
<dbReference type="InterPro" id="IPR041245">
    <property type="entry name" value="CARMIL_PH"/>
</dbReference>
<dbReference type="InterPro" id="IPR001611">
    <property type="entry name" value="Leu-rich_rpt"/>
</dbReference>
<dbReference type="InterPro" id="IPR032675">
    <property type="entry name" value="LRR_dom_sf"/>
</dbReference>
<dbReference type="InterPro" id="IPR011993">
    <property type="entry name" value="PH-like_dom_sf"/>
</dbReference>
<dbReference type="InterPro" id="IPR051279">
    <property type="entry name" value="PP1-Reg/Actin-Interact_Protein"/>
</dbReference>
<dbReference type="PANTHER" id="PTHR24112:SF39">
    <property type="entry name" value="F-ACTIN-UNCAPPING PROTEIN LRRC16A"/>
    <property type="match status" value="1"/>
</dbReference>
<dbReference type="PANTHER" id="PTHR24112">
    <property type="entry name" value="LEUCINE-RICH REPEAT, ISOFORM F-RELATED"/>
    <property type="match status" value="1"/>
</dbReference>
<dbReference type="Pfam" id="PF17888">
    <property type="entry name" value="Carm_PH"/>
    <property type="match status" value="1"/>
</dbReference>
<dbReference type="Pfam" id="PF16000">
    <property type="entry name" value="CARMIL_C"/>
    <property type="match status" value="1"/>
</dbReference>
<dbReference type="Pfam" id="PF13516">
    <property type="entry name" value="LRR_6"/>
    <property type="match status" value="2"/>
</dbReference>
<dbReference type="SMART" id="SM00368">
    <property type="entry name" value="LRR_RI"/>
    <property type="match status" value="5"/>
</dbReference>
<dbReference type="SUPFAM" id="SSF52047">
    <property type="entry name" value="RNI-like"/>
    <property type="match status" value="1"/>
</dbReference>
<protein>
    <recommendedName>
        <fullName evidence="1">F-actin-uncapping protein LRRC16A</fullName>
    </recommendedName>
    <alternativeName>
        <fullName evidence="2">CARMIL homolog</fullName>
    </alternativeName>
    <alternativeName>
        <fullName evidence="1">Capping protein regulator and myosin 1 linker protein 1</fullName>
    </alternativeName>
    <alternativeName>
        <fullName evidence="2">Capping protein, Arp2/3 and myosin-I linker homolog 1</fullName>
    </alternativeName>
    <alternativeName>
        <fullName evidence="6">Capping protein, Arp2/3 and myosin-I linker protein 1</fullName>
        <shortName evidence="6">CARML1</shortName>
    </alternativeName>
    <alternativeName>
        <fullName evidence="9">Leucine-rich repeat-containing protein 16A</fullName>
    </alternativeName>
</protein>
<comment type="function">
    <text evidence="5">Cell membrane-cytoskeleton-associated protein that plays a role in the regulation of actin polymerization at the barbed end of actin filaments. Prevents F-actin heterodimeric capping protein (CP) activity at the leading edges of migrating cells, and hence generates uncapped barbed ends and enhances actin polymerization, however, seems unable to nucleate filaments (PubMed:16054028). Plays a role in lamellipodial protrusion formations and cell migration (PubMed:16054028).</text>
</comment>
<comment type="subunit">
    <text evidence="1 5">Homodimer (By similarity). Interacts (via C-terminus) with heterodimeric capping protein (CP); this interaction uncaps barbed ends capped by CP, enhances barbed-end actin polymerization and promotes lamellipodial formation and cell migration (PubMed:16054028). Interacts with MYO1E (By similarity). Interacts with TRIO (By similarity).</text>
</comment>
<comment type="subcellular location">
    <subcellularLocation>
        <location evidence="5">Cytoplasm</location>
    </subcellularLocation>
    <subcellularLocation>
        <location evidence="5">Cytoplasm</location>
        <location evidence="5">Cytoskeleton</location>
    </subcellularLocation>
    <subcellularLocation>
        <location evidence="1">Cell membrane</location>
    </subcellularLocation>
    <subcellularLocation>
        <location evidence="5">Cell projection</location>
        <location evidence="5">Lamellipodium</location>
    </subcellularLocation>
    <text evidence="1 5">Found on macropinosomes (By similarity). Colocalized with heterodimeric capping protein (CP) and F-actin in lamellipodia but not with F-actin in stress fibers (PubMed:16054028).</text>
</comment>
<comment type="alternative products">
    <event type="alternative splicing"/>
    <isoform>
        <id>Q6EDY6-1</id>
        <name>1</name>
        <sequence type="displayed"/>
    </isoform>
    <isoform>
        <id>Q6EDY6-2</id>
        <name>2</name>
        <sequence type="described" ref="VSP_032421 VSP_032422"/>
    </isoform>
    <isoform>
        <id>Q6EDY6-3</id>
        <name>3</name>
        <sequence type="described" ref="VSP_032423 VSP_032424"/>
    </isoform>
</comment>
<comment type="domain">
    <text evidence="1">The C-terminus is necessary for localization to the cell membrane.</text>
</comment>
<comment type="miscellaneous">
    <molecule>Isoform 3</molecule>
    <text evidence="8">May be produced at very low levels due to a premature stop codon in the mRNA, leading to nonsense-mediated mRNA decay.</text>
</comment>
<comment type="similarity">
    <text evidence="8">Belongs to the CARMIL family.</text>
</comment>
<comment type="sequence caution" evidence="8">
    <conflict type="erroneous initiation">
        <sequence resource="EMBL-CDS" id="AAH12229"/>
    </conflict>
    <text>Truncated N-terminus.</text>
</comment>
<comment type="sequence caution" evidence="8">
    <conflict type="erroneous initiation">
        <sequence resource="EMBL-CDS" id="BAC31591"/>
    </conflict>
    <text>Truncated N-terminus.</text>
</comment>
<sequence>MTDESSDVPRELMESIKDVIGRKIKISVKKKVKLEVKGDRVENKVLVLTSCRAFLLSARIPSKLELTFSYLEIHGVICHKPAQMVVETEKCNMSMKMVSPEDVSEVLAHIGTCLRRIFPGLSPLRIMKKVSMEPSERLASLQALWDSQTLAEPGPCGGFSQMYACVCDWLGFSYKEEVQWDVDTIYLTQDTRELNLQDFSHLEHRDLIPIIAALEYNQWFTKLSSKDLKLSTDVCEQILRVVSRSNRLEELVLENAGLRIDFAQKLAGALAHNPNSGLHTINLAGNSLEDRGVSSLSIQFAKLPKGLKHLNLSKTSLSPKGVNSLCQSLSANPLTASTLTHLDLSGNALRGDDLSHMYNFLAQPNTIVHLDLSNTECSLEMVCSALLRGCLQCLAVLNLSRSVFSHRKGKEVPPSFKQFFSSSLALIQINLSGTKLSPEPLKALLLGLACNHSLKGVSLDLSNCELGHCLRSGGAQVLEGCIAEIHNITSLDISDNGLESDLSTLIVWLSKNRSIQHLALGKNFNNMKSKNLTPVLDNLVQMIQDEDSPLQSLSLADSKLKAEVTIIINALGSNTSLTKVDISGNGMGDMGAKMLAKALQINTKLRTVIWDKNNITAQGFQDIAVAMEKNYTLRFMPIPMYDAAQALKTNPEKTEEALQKIENYLLRNHETRKYLQEQAYRLQQGIVTSTTQQMIDRICVKVQDHLNSLRACGGDAIQEDLKAAERLMRDAKNSKTLLPNLYHVGGASWAGASGLSSSPIQETLESMAGEVTRVVDEQLKDLLESMVDAAETLCPNVMRKAHIRQDLIHASTEKISIPRTFVKNVLLEQSGIDILNKISEVKLTVASFLSDRIVDEILDSLSSSHRKLANHFSRLNKSLPQREDLEVELVEEKPVKRAILTVEDLTEVERLEDLDTCMMTPKSKRKSIHSRMLRPVSRAFEMEFDLDKALEEVPIHIEDPPFPSVRQEKRSSGLISELPSEEGRRLEHFTKLRPKRNKKQQPTQAAVCTISILPQDGEQNGLMGRVDEGVDEFFTKKVTKMDCKRSSSRSSDAHELGEGDEKKKRDSRRSGFLNLIKSRSRSERPPTVLMTEELSSPKGAMRSPPVDTTRKEIKAAEHNGAPDRTEEIKTPEPLEEGPAEEAGRAERSDSRGSPQGGRRYVQVMGSGLLAEMKAKQERRAACAQKKLGNDVISQDPSSPVSCNTERLEGGATVPKLQPGLPEARFGSGTPEKNAKAEPRVDGGCRSRSSSSMPTSPKPLLQSPKPSPSARPSIPQKPRTASRPEDTPDSPSGPSSPKVALLPPILKKVSSDKERDGQNSSQSSPRSFSQEASRRSWGPAQEYQEQKQRSSGKDGHQGSKCSDSGEEAEKEFIFV</sequence>
<reference key="1">
    <citation type="journal article" date="2005" name="Dev. Cell">
        <title>Mammalian CARMIL inhibits actin filament capping by capping protein.</title>
        <authorList>
            <person name="Yang C."/>
            <person name="Pring M."/>
            <person name="Wear M.A."/>
            <person name="Huang M."/>
            <person name="Cooper J.A."/>
            <person name="Svitkina T.M."/>
            <person name="Zigmond S.H."/>
        </authorList>
    </citation>
    <scope>NUCLEOTIDE SEQUENCE [MRNA] (ISOFORM 1)</scope>
    <scope>FUNCTION</scope>
    <scope>SUBCELLULAR LOCATION</scope>
    <scope>INTERACTION WITH F-ACTIN-CAPPING PROTEIN</scope>
    <scope>MUTAGENESIS OF LYS-991 AND ARG-993</scope>
    <source>
        <strain>C57BL/6J</strain>
    </source>
</reference>
<reference key="2">
    <citation type="journal article" date="2005" name="Science">
        <title>The transcriptional landscape of the mammalian genome.</title>
        <authorList>
            <person name="Carninci P."/>
            <person name="Kasukawa T."/>
            <person name="Katayama S."/>
            <person name="Gough J."/>
            <person name="Frith M.C."/>
            <person name="Maeda N."/>
            <person name="Oyama R."/>
            <person name="Ravasi T."/>
            <person name="Lenhard B."/>
            <person name="Wells C."/>
            <person name="Kodzius R."/>
            <person name="Shimokawa K."/>
            <person name="Bajic V.B."/>
            <person name="Brenner S.E."/>
            <person name="Batalov S."/>
            <person name="Forrest A.R."/>
            <person name="Zavolan M."/>
            <person name="Davis M.J."/>
            <person name="Wilming L.G."/>
            <person name="Aidinis V."/>
            <person name="Allen J.E."/>
            <person name="Ambesi-Impiombato A."/>
            <person name="Apweiler R."/>
            <person name="Aturaliya R.N."/>
            <person name="Bailey T.L."/>
            <person name="Bansal M."/>
            <person name="Baxter L."/>
            <person name="Beisel K.W."/>
            <person name="Bersano T."/>
            <person name="Bono H."/>
            <person name="Chalk A.M."/>
            <person name="Chiu K.P."/>
            <person name="Choudhary V."/>
            <person name="Christoffels A."/>
            <person name="Clutterbuck D.R."/>
            <person name="Crowe M.L."/>
            <person name="Dalla E."/>
            <person name="Dalrymple B.P."/>
            <person name="de Bono B."/>
            <person name="Della Gatta G."/>
            <person name="di Bernardo D."/>
            <person name="Down T."/>
            <person name="Engstrom P."/>
            <person name="Fagiolini M."/>
            <person name="Faulkner G."/>
            <person name="Fletcher C.F."/>
            <person name="Fukushima T."/>
            <person name="Furuno M."/>
            <person name="Futaki S."/>
            <person name="Gariboldi M."/>
            <person name="Georgii-Hemming P."/>
            <person name="Gingeras T.R."/>
            <person name="Gojobori T."/>
            <person name="Green R.E."/>
            <person name="Gustincich S."/>
            <person name="Harbers M."/>
            <person name="Hayashi Y."/>
            <person name="Hensch T.K."/>
            <person name="Hirokawa N."/>
            <person name="Hill D."/>
            <person name="Huminiecki L."/>
            <person name="Iacono M."/>
            <person name="Ikeo K."/>
            <person name="Iwama A."/>
            <person name="Ishikawa T."/>
            <person name="Jakt M."/>
            <person name="Kanapin A."/>
            <person name="Katoh M."/>
            <person name="Kawasawa Y."/>
            <person name="Kelso J."/>
            <person name="Kitamura H."/>
            <person name="Kitano H."/>
            <person name="Kollias G."/>
            <person name="Krishnan S.P."/>
            <person name="Kruger A."/>
            <person name="Kummerfeld S.K."/>
            <person name="Kurochkin I.V."/>
            <person name="Lareau L.F."/>
            <person name="Lazarevic D."/>
            <person name="Lipovich L."/>
            <person name="Liu J."/>
            <person name="Liuni S."/>
            <person name="McWilliam S."/>
            <person name="Madan Babu M."/>
            <person name="Madera M."/>
            <person name="Marchionni L."/>
            <person name="Matsuda H."/>
            <person name="Matsuzawa S."/>
            <person name="Miki H."/>
            <person name="Mignone F."/>
            <person name="Miyake S."/>
            <person name="Morris K."/>
            <person name="Mottagui-Tabar S."/>
            <person name="Mulder N."/>
            <person name="Nakano N."/>
            <person name="Nakauchi H."/>
            <person name="Ng P."/>
            <person name="Nilsson R."/>
            <person name="Nishiguchi S."/>
            <person name="Nishikawa S."/>
            <person name="Nori F."/>
            <person name="Ohara O."/>
            <person name="Okazaki Y."/>
            <person name="Orlando V."/>
            <person name="Pang K.C."/>
            <person name="Pavan W.J."/>
            <person name="Pavesi G."/>
            <person name="Pesole G."/>
            <person name="Petrovsky N."/>
            <person name="Piazza S."/>
            <person name="Reed J."/>
            <person name="Reid J.F."/>
            <person name="Ring B.Z."/>
            <person name="Ringwald M."/>
            <person name="Rost B."/>
            <person name="Ruan Y."/>
            <person name="Salzberg S.L."/>
            <person name="Sandelin A."/>
            <person name="Schneider C."/>
            <person name="Schoenbach C."/>
            <person name="Sekiguchi K."/>
            <person name="Semple C.A."/>
            <person name="Seno S."/>
            <person name="Sessa L."/>
            <person name="Sheng Y."/>
            <person name="Shibata Y."/>
            <person name="Shimada H."/>
            <person name="Shimada K."/>
            <person name="Silva D."/>
            <person name="Sinclair B."/>
            <person name="Sperling S."/>
            <person name="Stupka E."/>
            <person name="Sugiura K."/>
            <person name="Sultana R."/>
            <person name="Takenaka Y."/>
            <person name="Taki K."/>
            <person name="Tammoja K."/>
            <person name="Tan S.L."/>
            <person name="Tang S."/>
            <person name="Taylor M.S."/>
            <person name="Tegner J."/>
            <person name="Teichmann S.A."/>
            <person name="Ueda H.R."/>
            <person name="van Nimwegen E."/>
            <person name="Verardo R."/>
            <person name="Wei C.L."/>
            <person name="Yagi K."/>
            <person name="Yamanishi H."/>
            <person name="Zabarovsky E."/>
            <person name="Zhu S."/>
            <person name="Zimmer A."/>
            <person name="Hide W."/>
            <person name="Bult C."/>
            <person name="Grimmond S.M."/>
            <person name="Teasdale R.D."/>
            <person name="Liu E.T."/>
            <person name="Brusic V."/>
            <person name="Quackenbush J."/>
            <person name="Wahlestedt C."/>
            <person name="Mattick J.S."/>
            <person name="Hume D.A."/>
            <person name="Kai C."/>
            <person name="Sasaki D."/>
            <person name="Tomaru Y."/>
            <person name="Fukuda S."/>
            <person name="Kanamori-Katayama M."/>
            <person name="Suzuki M."/>
            <person name="Aoki J."/>
            <person name="Arakawa T."/>
            <person name="Iida J."/>
            <person name="Imamura K."/>
            <person name="Itoh M."/>
            <person name="Kato T."/>
            <person name="Kawaji H."/>
            <person name="Kawagashira N."/>
            <person name="Kawashima T."/>
            <person name="Kojima M."/>
            <person name="Kondo S."/>
            <person name="Konno H."/>
            <person name="Nakano K."/>
            <person name="Ninomiya N."/>
            <person name="Nishio T."/>
            <person name="Okada M."/>
            <person name="Plessy C."/>
            <person name="Shibata K."/>
            <person name="Shiraki T."/>
            <person name="Suzuki S."/>
            <person name="Tagami M."/>
            <person name="Waki K."/>
            <person name="Watahiki A."/>
            <person name="Okamura-Oho Y."/>
            <person name="Suzuki H."/>
            <person name="Kawai J."/>
            <person name="Hayashizaki Y."/>
        </authorList>
    </citation>
    <scope>NUCLEOTIDE SEQUENCE [LARGE SCALE MRNA] (ISOFORM 2)</scope>
    <scope>NUCLEOTIDE SEQUENCE [LARGE SCALE MRNA] OF 410-1374 (ISOFORM 3)</scope>
    <source>
        <strain>C57BL/6J</strain>
        <tissue>Brain cortex</tissue>
        <tissue>Spinal ganglion</tissue>
    </source>
</reference>
<reference key="3">
    <citation type="journal article" date="2009" name="PLoS Biol.">
        <title>Lineage-specific biology revealed by a finished genome assembly of the mouse.</title>
        <authorList>
            <person name="Church D.M."/>
            <person name="Goodstadt L."/>
            <person name="Hillier L.W."/>
            <person name="Zody M.C."/>
            <person name="Goldstein S."/>
            <person name="She X."/>
            <person name="Bult C.J."/>
            <person name="Agarwala R."/>
            <person name="Cherry J.L."/>
            <person name="DiCuccio M."/>
            <person name="Hlavina W."/>
            <person name="Kapustin Y."/>
            <person name="Meric P."/>
            <person name="Maglott D."/>
            <person name="Birtle Z."/>
            <person name="Marques A.C."/>
            <person name="Graves T."/>
            <person name="Zhou S."/>
            <person name="Teague B."/>
            <person name="Potamousis K."/>
            <person name="Churas C."/>
            <person name="Place M."/>
            <person name="Herschleb J."/>
            <person name="Runnheim R."/>
            <person name="Forrest D."/>
            <person name="Amos-Landgraf J."/>
            <person name="Schwartz D.C."/>
            <person name="Cheng Z."/>
            <person name="Lindblad-Toh K."/>
            <person name="Eichler E.E."/>
            <person name="Ponting C.P."/>
        </authorList>
    </citation>
    <scope>NUCLEOTIDE SEQUENCE [LARGE SCALE GENOMIC DNA]</scope>
    <source>
        <strain>C57BL/6J</strain>
    </source>
</reference>
<reference key="4">
    <citation type="journal article" date="2004" name="Genome Res.">
        <title>The status, quality, and expansion of the NIH full-length cDNA project: the Mammalian Gene Collection (MGC).</title>
        <authorList>
            <consortium name="The MGC Project Team"/>
        </authorList>
    </citation>
    <scope>NUCLEOTIDE SEQUENCE [LARGE SCALE MRNA] OF 595-1374 (ISOFORM 1)</scope>
    <source>
        <strain>Czech II</strain>
        <tissue>Mammary tumor</tissue>
    </source>
</reference>
<reference key="5">
    <citation type="journal article" date="2006" name="Mol. Cell. Proteomics">
        <title>Comprehensive identification of phosphorylation sites in postsynaptic density preparations.</title>
        <authorList>
            <person name="Trinidad J.C."/>
            <person name="Specht C.G."/>
            <person name="Thalhammer A."/>
            <person name="Schoepfer R."/>
            <person name="Burlingame A.L."/>
        </authorList>
    </citation>
    <scope>IDENTIFICATION BY MASS SPECTROMETRY [LARGE SCALE ANALYSIS]</scope>
    <source>
        <tissue>Brain</tissue>
    </source>
</reference>
<reference key="6">
    <citation type="journal article" date="2010" name="Cell">
        <title>A tissue-specific atlas of mouse protein phosphorylation and expression.</title>
        <authorList>
            <person name="Huttlin E.L."/>
            <person name="Jedrychowski M.P."/>
            <person name="Elias J.E."/>
            <person name="Goswami T."/>
            <person name="Rad R."/>
            <person name="Beausoleil S.A."/>
            <person name="Villen J."/>
            <person name="Haas W."/>
            <person name="Sowa M.E."/>
            <person name="Gygi S.P."/>
        </authorList>
    </citation>
    <scope>PHOSPHORYLATION [LARGE SCALE ANALYSIS] AT THR-920; SER-972; SER-1291; SER-1295; SER-1335 AND SER-1363</scope>
    <scope>IDENTIFICATION BY MASS SPECTROMETRY [LARGE SCALE ANALYSIS]</scope>
    <source>
        <tissue>Brain</tissue>
        <tissue>Heart</tissue>
        <tissue>Kidney</tissue>
        <tissue>Lung</tissue>
        <tissue>Pancreas</tissue>
        <tissue>Spleen</tissue>
        <tissue>Testis</tissue>
    </source>
</reference>
<gene>
    <name evidence="1" type="primary">Carmil1</name>
    <name evidence="2" type="synonym">Carmil</name>
    <name type="synonym">Lrrc16</name>
    <name evidence="9" type="synonym">Lrrc16a</name>
</gene>
<name>CARL1_MOUSE</name>
<keyword id="KW-0002">3D-structure</keyword>
<keyword id="KW-0007">Acetylation</keyword>
<keyword id="KW-0025">Alternative splicing</keyword>
<keyword id="KW-1003">Cell membrane</keyword>
<keyword id="KW-0966">Cell projection</keyword>
<keyword id="KW-0175">Coiled coil</keyword>
<keyword id="KW-0963">Cytoplasm</keyword>
<keyword id="KW-0206">Cytoskeleton</keyword>
<keyword id="KW-0433">Leucine-rich repeat</keyword>
<keyword id="KW-0472">Membrane</keyword>
<keyword id="KW-0597">Phosphoprotein</keyword>
<keyword id="KW-1185">Reference proteome</keyword>
<keyword id="KW-0677">Repeat</keyword>
<evidence type="ECO:0000250" key="1">
    <source>
        <dbReference type="UniProtKB" id="Q5VZK9"/>
    </source>
</evidence>
<evidence type="ECO:0000250" key="2">
    <source>
        <dbReference type="UniProtKB" id="Q95VZ3"/>
    </source>
</evidence>
<evidence type="ECO:0000255" key="3"/>
<evidence type="ECO:0000256" key="4">
    <source>
        <dbReference type="SAM" id="MobiDB-lite"/>
    </source>
</evidence>
<evidence type="ECO:0000269" key="5">
    <source>
    </source>
</evidence>
<evidence type="ECO:0000303" key="6">
    <source>
    </source>
</evidence>
<evidence type="ECO:0000303" key="7">
    <source>
    </source>
</evidence>
<evidence type="ECO:0000305" key="8"/>
<evidence type="ECO:0000312" key="9">
    <source>
        <dbReference type="MGI" id="MGI:1915982"/>
    </source>
</evidence>
<evidence type="ECO:0007744" key="10">
    <source>
    </source>
</evidence>
<evidence type="ECO:0007829" key="11">
    <source>
        <dbReference type="PDB" id="2KZ7"/>
    </source>
</evidence>
<evidence type="ECO:0007829" key="12">
    <source>
        <dbReference type="PDB" id="3AA0"/>
    </source>
</evidence>
<evidence type="ECO:0007829" key="13">
    <source>
        <dbReference type="PDB" id="4K17"/>
    </source>
</evidence>
<accession>Q6EDY6</accession>
<accession>Q5NCM0</accession>
<accession>Q8BQ45</accession>
<accession>Q8BRS5</accession>
<accession>Q91YZ6</accession>
<proteinExistence type="evidence at protein level"/>